<proteinExistence type="predicted"/>
<protein>
    <recommendedName>
        <fullName>Uncharacterized gene 28 protein</fullName>
    </recommendedName>
</protein>
<dbReference type="EMBL" id="U20824">
    <property type="protein sequence ID" value="AAC13815.1"/>
    <property type="molecule type" value="Genomic_DNA"/>
</dbReference>
<dbReference type="PIR" id="S55622">
    <property type="entry name" value="S55622"/>
</dbReference>
<dbReference type="KEGG" id="vg:1461023"/>
<dbReference type="Proteomes" id="UP000007083">
    <property type="component" value="Segment"/>
</dbReference>
<dbReference type="GO" id="GO:0033644">
    <property type="term" value="C:host cell membrane"/>
    <property type="evidence" value="ECO:0007669"/>
    <property type="project" value="UniProtKB-SubCell"/>
</dbReference>
<dbReference type="GO" id="GO:0016020">
    <property type="term" value="C:membrane"/>
    <property type="evidence" value="ECO:0007669"/>
    <property type="project" value="UniProtKB-KW"/>
</dbReference>
<name>VG28_EHV2</name>
<accession>Q66631</accession>
<gene>
    <name type="primary">28</name>
</gene>
<evidence type="ECO:0000255" key="1"/>
<evidence type="ECO:0000256" key="2">
    <source>
        <dbReference type="SAM" id="MobiDB-lite"/>
    </source>
</evidence>
<evidence type="ECO:0000305" key="3"/>
<feature type="chain" id="PRO_0000406026" description="Uncharacterized gene 28 protein">
    <location>
        <begin position="1"/>
        <end position="98"/>
    </location>
</feature>
<feature type="transmembrane region" description="Helical" evidence="1">
    <location>
        <begin position="29"/>
        <end position="49"/>
    </location>
</feature>
<feature type="region of interest" description="Disordered" evidence="2">
    <location>
        <begin position="1"/>
        <end position="26"/>
    </location>
</feature>
<feature type="compositionally biased region" description="Low complexity" evidence="2">
    <location>
        <begin position="1"/>
        <end position="21"/>
    </location>
</feature>
<organism>
    <name type="scientific">Equine herpesvirus 2 (strain 86/87)</name>
    <name type="common">EHV-2</name>
    <dbReference type="NCBI Taxonomy" id="82831"/>
    <lineage>
        <taxon>Viruses</taxon>
        <taxon>Duplodnaviria</taxon>
        <taxon>Heunggongvirae</taxon>
        <taxon>Peploviricota</taxon>
        <taxon>Herviviricetes</taxon>
        <taxon>Herpesvirales</taxon>
        <taxon>Orthoherpesviridae</taxon>
        <taxon>Gammaherpesvirinae</taxon>
        <taxon>Percavirus</taxon>
        <taxon>Percavirus equidgamma2</taxon>
        <taxon>Equid gammaherpesvirus 2</taxon>
    </lineage>
</organism>
<organismHost>
    <name type="scientific">Equus caballus</name>
    <name type="common">Horse</name>
    <dbReference type="NCBI Taxonomy" id="9796"/>
</organismHost>
<sequence>MTTSPTTISTTTAATTTTTTPGKGTDSPMVYIEAMLFSMLVLILLIIVCAGYVHVKNLYYRSRYGVTAIYQQVEAECRGVSLGRSVDEPPYQSIYMPD</sequence>
<keyword id="KW-1043">Host membrane</keyword>
<keyword id="KW-0472">Membrane</keyword>
<keyword id="KW-1185">Reference proteome</keyword>
<keyword id="KW-0812">Transmembrane</keyword>
<keyword id="KW-1133">Transmembrane helix</keyword>
<reference key="1">
    <citation type="journal article" date="1995" name="J. Mol. Biol.">
        <title>The DNA sequence of equine herpesvirus 2.</title>
        <authorList>
            <person name="Telford E.A.R."/>
            <person name="Watson M.S."/>
            <person name="Aird H.C."/>
            <person name="Perry J."/>
            <person name="Davison A.J."/>
        </authorList>
    </citation>
    <scope>NUCLEOTIDE SEQUENCE [LARGE SCALE GENOMIC DNA]</scope>
</reference>
<comment type="subcellular location">
    <subcellularLocation>
        <location evidence="3">Host membrane</location>
        <topology evidence="3">Single-pass membrane protein</topology>
    </subcellularLocation>
</comment>